<reference key="1">
    <citation type="journal article" date="2005" name="Nat. Biotechnol.">
        <title>Complete genome sequence of the plant commensal Pseudomonas fluorescens Pf-5.</title>
        <authorList>
            <person name="Paulsen I.T."/>
            <person name="Press C.M."/>
            <person name="Ravel J."/>
            <person name="Kobayashi D.Y."/>
            <person name="Myers G.S.A."/>
            <person name="Mavrodi D.V."/>
            <person name="DeBoy R.T."/>
            <person name="Seshadri R."/>
            <person name="Ren Q."/>
            <person name="Madupu R."/>
            <person name="Dodson R.J."/>
            <person name="Durkin A.S."/>
            <person name="Brinkac L.M."/>
            <person name="Daugherty S.C."/>
            <person name="Sullivan S.A."/>
            <person name="Rosovitz M.J."/>
            <person name="Gwinn M.L."/>
            <person name="Zhou L."/>
            <person name="Schneider D.J."/>
            <person name="Cartinhour S.W."/>
            <person name="Nelson W.C."/>
            <person name="Weidman J."/>
            <person name="Watkins K."/>
            <person name="Tran K."/>
            <person name="Khouri H."/>
            <person name="Pierson E.A."/>
            <person name="Pierson L.S. III"/>
            <person name="Thomashow L.S."/>
            <person name="Loper J.E."/>
        </authorList>
    </citation>
    <scope>NUCLEOTIDE SEQUENCE [LARGE SCALE GENOMIC DNA]</scope>
    <source>
        <strain>ATCC BAA-477 / NRRL B-23932 / Pf-5</strain>
    </source>
</reference>
<proteinExistence type="inferred from homology"/>
<name>SECB_PSEF5</name>
<evidence type="ECO:0000255" key="1">
    <source>
        <dbReference type="HAMAP-Rule" id="MF_00821"/>
    </source>
</evidence>
<feature type="chain" id="PRO_0000055397" description="Protein-export protein SecB">
    <location>
        <begin position="1"/>
        <end position="159"/>
    </location>
</feature>
<dbReference type="EMBL" id="CP000076">
    <property type="protein sequence ID" value="AAY95783.1"/>
    <property type="molecule type" value="Genomic_DNA"/>
</dbReference>
<dbReference type="RefSeq" id="WP_011058749.1">
    <property type="nucleotide sequence ID" value="NC_004129.6"/>
</dbReference>
<dbReference type="SMR" id="Q4KJR5"/>
<dbReference type="STRING" id="220664.PFL_0374"/>
<dbReference type="GeneID" id="57473363"/>
<dbReference type="KEGG" id="pfl:PFL_0374"/>
<dbReference type="PATRIC" id="fig|220664.5.peg.382"/>
<dbReference type="eggNOG" id="COG1952">
    <property type="taxonomic scope" value="Bacteria"/>
</dbReference>
<dbReference type="HOGENOM" id="CLU_111574_1_0_6"/>
<dbReference type="Proteomes" id="UP000008540">
    <property type="component" value="Chromosome"/>
</dbReference>
<dbReference type="GO" id="GO:0005737">
    <property type="term" value="C:cytoplasm"/>
    <property type="evidence" value="ECO:0007669"/>
    <property type="project" value="UniProtKB-SubCell"/>
</dbReference>
<dbReference type="GO" id="GO:0051082">
    <property type="term" value="F:unfolded protein binding"/>
    <property type="evidence" value="ECO:0007669"/>
    <property type="project" value="InterPro"/>
</dbReference>
<dbReference type="GO" id="GO:0006457">
    <property type="term" value="P:protein folding"/>
    <property type="evidence" value="ECO:0007669"/>
    <property type="project" value="UniProtKB-UniRule"/>
</dbReference>
<dbReference type="GO" id="GO:0051262">
    <property type="term" value="P:protein tetramerization"/>
    <property type="evidence" value="ECO:0007669"/>
    <property type="project" value="InterPro"/>
</dbReference>
<dbReference type="GO" id="GO:0015031">
    <property type="term" value="P:protein transport"/>
    <property type="evidence" value="ECO:0007669"/>
    <property type="project" value="UniProtKB-UniRule"/>
</dbReference>
<dbReference type="Gene3D" id="3.10.420.10">
    <property type="entry name" value="SecB-like"/>
    <property type="match status" value="1"/>
</dbReference>
<dbReference type="HAMAP" id="MF_00821">
    <property type="entry name" value="SecB"/>
    <property type="match status" value="1"/>
</dbReference>
<dbReference type="InterPro" id="IPR003708">
    <property type="entry name" value="SecB"/>
</dbReference>
<dbReference type="InterPro" id="IPR035958">
    <property type="entry name" value="SecB-like_sf"/>
</dbReference>
<dbReference type="NCBIfam" id="NF004393">
    <property type="entry name" value="PRK05751.1-4"/>
    <property type="match status" value="1"/>
</dbReference>
<dbReference type="NCBIfam" id="TIGR00809">
    <property type="entry name" value="secB"/>
    <property type="match status" value="1"/>
</dbReference>
<dbReference type="PANTHER" id="PTHR36918">
    <property type="match status" value="1"/>
</dbReference>
<dbReference type="PANTHER" id="PTHR36918:SF1">
    <property type="entry name" value="PROTEIN-EXPORT PROTEIN SECB"/>
    <property type="match status" value="1"/>
</dbReference>
<dbReference type="Pfam" id="PF02556">
    <property type="entry name" value="SecB"/>
    <property type="match status" value="1"/>
</dbReference>
<dbReference type="PRINTS" id="PR01594">
    <property type="entry name" value="SECBCHAPRONE"/>
</dbReference>
<dbReference type="SUPFAM" id="SSF54611">
    <property type="entry name" value="SecB-like"/>
    <property type="match status" value="1"/>
</dbReference>
<protein>
    <recommendedName>
        <fullName evidence="1">Protein-export protein SecB</fullName>
    </recommendedName>
</protein>
<keyword id="KW-0143">Chaperone</keyword>
<keyword id="KW-0963">Cytoplasm</keyword>
<keyword id="KW-0653">Protein transport</keyword>
<keyword id="KW-0811">Translocation</keyword>
<keyword id="KW-0813">Transport</keyword>
<gene>
    <name evidence="1" type="primary">secB</name>
    <name type="ordered locus">PFL_0374</name>
</gene>
<organism>
    <name type="scientific">Pseudomonas fluorescens (strain ATCC BAA-477 / NRRL B-23932 / Pf-5)</name>
    <dbReference type="NCBI Taxonomy" id="220664"/>
    <lineage>
        <taxon>Bacteria</taxon>
        <taxon>Pseudomonadati</taxon>
        <taxon>Pseudomonadota</taxon>
        <taxon>Gammaproteobacteria</taxon>
        <taxon>Pseudomonadales</taxon>
        <taxon>Pseudomonadaceae</taxon>
        <taxon>Pseudomonas</taxon>
    </lineage>
</organism>
<comment type="function">
    <text evidence="1">One of the proteins required for the normal export of preproteins out of the cell cytoplasm. It is a molecular chaperone that binds to a subset of precursor proteins, maintaining them in a translocation-competent state. It also specifically binds to its receptor SecA.</text>
</comment>
<comment type="subunit">
    <text evidence="1">Homotetramer, a dimer of dimers. One homotetramer interacts with 1 SecA dimer.</text>
</comment>
<comment type="subcellular location">
    <subcellularLocation>
        <location evidence="1">Cytoplasm</location>
    </subcellularLocation>
</comment>
<comment type="similarity">
    <text evidence="1">Belongs to the SecB family.</text>
</comment>
<accession>Q4KJR5</accession>
<sequence>MTDQQNTVADDESAPQFSLQRIYVRDLSFEAPKSPAIFRQQWEPSVGLDLNTRQTALEADFHEVVLTLSVTVKNGDEVAFIAEVQQAGIFLIKNLDEASMSHTLGAFCPNILFPYAREALDSLVTRGSFPALMLAPVNFDALYAQELQRLQSAGENTVQ</sequence>